<dbReference type="EMBL" id="AJ249224">
    <property type="protein sequence ID" value="CAB54143.1"/>
    <property type="molecule type" value="Genomic_DNA"/>
</dbReference>
<dbReference type="EMBL" id="BC111544">
    <property type="protein sequence ID" value="AAI11545.1"/>
    <property type="status" value="ALT_SEQ"/>
    <property type="molecule type" value="mRNA"/>
</dbReference>
<dbReference type="PIR" id="E56556">
    <property type="entry name" value="E56556"/>
</dbReference>
<dbReference type="RefSeq" id="NP_001089960.2">
    <property type="nucleotide sequence ID" value="NM_001096491.2"/>
</dbReference>
<dbReference type="SMR" id="Q9PVY9"/>
<dbReference type="DNASU" id="735030"/>
<dbReference type="GeneID" id="735030"/>
<dbReference type="KEGG" id="xla:735030"/>
<dbReference type="AGR" id="Xenbase:XB-GENE-865122"/>
<dbReference type="CTD" id="735030"/>
<dbReference type="Xenbase" id="XB-GENE-865122">
    <property type="gene designation" value="foxc2.L"/>
</dbReference>
<dbReference type="OMA" id="REMFTSH"/>
<dbReference type="OrthoDB" id="5954824at2759"/>
<dbReference type="Proteomes" id="UP000186698">
    <property type="component" value="Chromosome 4L"/>
</dbReference>
<dbReference type="Bgee" id="735030">
    <property type="expression patterns" value="Expressed in internal ear and 9 other cell types or tissues"/>
</dbReference>
<dbReference type="GO" id="GO:0005634">
    <property type="term" value="C:nucleus"/>
    <property type="evidence" value="ECO:0000303"/>
    <property type="project" value="UniProtKB"/>
</dbReference>
<dbReference type="GO" id="GO:0003677">
    <property type="term" value="F:DNA binding"/>
    <property type="evidence" value="ECO:0000303"/>
    <property type="project" value="UniProtKB"/>
</dbReference>
<dbReference type="GO" id="GO:0003700">
    <property type="term" value="F:DNA-binding transcription factor activity"/>
    <property type="evidence" value="ECO:0000250"/>
    <property type="project" value="UniProtKB"/>
</dbReference>
<dbReference type="GO" id="GO:0000981">
    <property type="term" value="F:DNA-binding transcription factor activity, RNA polymerase II-specific"/>
    <property type="evidence" value="ECO:0000318"/>
    <property type="project" value="GO_Central"/>
</dbReference>
<dbReference type="GO" id="GO:1990841">
    <property type="term" value="F:promoter-specific chromatin binding"/>
    <property type="evidence" value="ECO:0000250"/>
    <property type="project" value="UniProtKB"/>
</dbReference>
<dbReference type="GO" id="GO:0000978">
    <property type="term" value="F:RNA polymerase II cis-regulatory region sequence-specific DNA binding"/>
    <property type="evidence" value="ECO:0000318"/>
    <property type="project" value="GO_Central"/>
</dbReference>
<dbReference type="GO" id="GO:0009653">
    <property type="term" value="P:anatomical structure morphogenesis"/>
    <property type="evidence" value="ECO:0000318"/>
    <property type="project" value="GO_Central"/>
</dbReference>
<dbReference type="GO" id="GO:0030154">
    <property type="term" value="P:cell differentiation"/>
    <property type="evidence" value="ECO:0000318"/>
    <property type="project" value="GO_Central"/>
</dbReference>
<dbReference type="GO" id="GO:0007498">
    <property type="term" value="P:mesoderm development"/>
    <property type="evidence" value="ECO:0000270"/>
    <property type="project" value="UniProtKB"/>
</dbReference>
<dbReference type="GO" id="GO:0045893">
    <property type="term" value="P:positive regulation of DNA-templated transcription"/>
    <property type="evidence" value="ECO:0000250"/>
    <property type="project" value="UniProtKB"/>
</dbReference>
<dbReference type="GO" id="GO:0045944">
    <property type="term" value="P:positive regulation of transcription by RNA polymerase II"/>
    <property type="evidence" value="ECO:0000250"/>
    <property type="project" value="UniProtKB"/>
</dbReference>
<dbReference type="GO" id="GO:0006355">
    <property type="term" value="P:regulation of DNA-templated transcription"/>
    <property type="evidence" value="ECO:0000303"/>
    <property type="project" value="UniProtKB"/>
</dbReference>
<dbReference type="GO" id="GO:0006357">
    <property type="term" value="P:regulation of transcription by RNA polymerase II"/>
    <property type="evidence" value="ECO:0000318"/>
    <property type="project" value="GO_Central"/>
</dbReference>
<dbReference type="CDD" id="cd20044">
    <property type="entry name" value="FH_FOXC1"/>
    <property type="match status" value="1"/>
</dbReference>
<dbReference type="FunFam" id="1.10.10.10:FF:000016">
    <property type="entry name" value="Forkhead box protein I1"/>
    <property type="match status" value="1"/>
</dbReference>
<dbReference type="Gene3D" id="1.10.10.10">
    <property type="entry name" value="Winged helix-like DNA-binding domain superfamily/Winged helix DNA-binding domain"/>
    <property type="match status" value="1"/>
</dbReference>
<dbReference type="InterPro" id="IPR001766">
    <property type="entry name" value="Fork_head_dom"/>
</dbReference>
<dbReference type="InterPro" id="IPR050211">
    <property type="entry name" value="FOX_domain-containing"/>
</dbReference>
<dbReference type="InterPro" id="IPR047391">
    <property type="entry name" value="FOXC1/C2-like_FH"/>
</dbReference>
<dbReference type="InterPro" id="IPR018122">
    <property type="entry name" value="TF_fork_head_CS_1"/>
</dbReference>
<dbReference type="InterPro" id="IPR030456">
    <property type="entry name" value="TF_fork_head_CS_2"/>
</dbReference>
<dbReference type="InterPro" id="IPR036388">
    <property type="entry name" value="WH-like_DNA-bd_sf"/>
</dbReference>
<dbReference type="InterPro" id="IPR036390">
    <property type="entry name" value="WH_DNA-bd_sf"/>
</dbReference>
<dbReference type="PANTHER" id="PTHR11829">
    <property type="entry name" value="FORKHEAD BOX PROTEIN"/>
    <property type="match status" value="1"/>
</dbReference>
<dbReference type="PANTHER" id="PTHR11829:SF68">
    <property type="entry name" value="FORKHEAD BOX PROTEIN C1"/>
    <property type="match status" value="1"/>
</dbReference>
<dbReference type="Pfam" id="PF00250">
    <property type="entry name" value="Forkhead"/>
    <property type="match status" value="1"/>
</dbReference>
<dbReference type="PRINTS" id="PR00053">
    <property type="entry name" value="FORKHEAD"/>
</dbReference>
<dbReference type="SMART" id="SM00339">
    <property type="entry name" value="FH"/>
    <property type="match status" value="1"/>
</dbReference>
<dbReference type="SUPFAM" id="SSF46785">
    <property type="entry name" value="Winged helix' DNA-binding domain"/>
    <property type="match status" value="1"/>
</dbReference>
<dbReference type="PROSITE" id="PS00657">
    <property type="entry name" value="FORK_HEAD_1"/>
    <property type="match status" value="1"/>
</dbReference>
<dbReference type="PROSITE" id="PS00658">
    <property type="entry name" value="FORK_HEAD_2"/>
    <property type="match status" value="1"/>
</dbReference>
<dbReference type="PROSITE" id="PS50039">
    <property type="entry name" value="FORK_HEAD_3"/>
    <property type="match status" value="1"/>
</dbReference>
<evidence type="ECO:0000250" key="1">
    <source>
        <dbReference type="UniProtKB" id="Q61850"/>
    </source>
</evidence>
<evidence type="ECO:0000250" key="2">
    <source>
        <dbReference type="UniProtKB" id="Q99958"/>
    </source>
</evidence>
<evidence type="ECO:0000255" key="3">
    <source>
        <dbReference type="PROSITE-ProRule" id="PRU00089"/>
    </source>
</evidence>
<evidence type="ECO:0000256" key="4">
    <source>
        <dbReference type="SAM" id="MobiDB-lite"/>
    </source>
</evidence>
<evidence type="ECO:0000269" key="5">
    <source>
    </source>
</evidence>
<evidence type="ECO:0000269" key="6">
    <source>
    </source>
</evidence>
<evidence type="ECO:0000269" key="7">
    <source>
    </source>
</evidence>
<evidence type="ECO:0000269" key="8">
    <source ref="3"/>
</evidence>
<evidence type="ECO:0000305" key="9"/>
<evidence type="ECO:0000312" key="10">
    <source>
        <dbReference type="EMBL" id="AAI11545.1"/>
    </source>
</evidence>
<evidence type="ECO:0000312" key="11">
    <source>
        <dbReference type="EMBL" id="CAB54143.1"/>
    </source>
</evidence>
<organism>
    <name type="scientific">Xenopus laevis</name>
    <name type="common">African clawed frog</name>
    <dbReference type="NCBI Taxonomy" id="8355"/>
    <lineage>
        <taxon>Eukaryota</taxon>
        <taxon>Metazoa</taxon>
        <taxon>Chordata</taxon>
        <taxon>Craniata</taxon>
        <taxon>Vertebrata</taxon>
        <taxon>Euteleostomi</taxon>
        <taxon>Amphibia</taxon>
        <taxon>Batrachia</taxon>
        <taxon>Anura</taxon>
        <taxon>Pipoidea</taxon>
        <taxon>Pipidae</taxon>
        <taxon>Xenopodinae</taxon>
        <taxon>Xenopus</taxon>
        <taxon>Xenopus</taxon>
    </lineage>
</organism>
<keyword id="KW-0010">Activator</keyword>
<keyword id="KW-0217">Developmental protein</keyword>
<keyword id="KW-0238">DNA-binding</keyword>
<keyword id="KW-0539">Nucleus</keyword>
<keyword id="KW-1185">Reference proteome</keyword>
<keyword id="KW-0804">Transcription</keyword>
<keyword id="KW-0805">Transcription regulation</keyword>
<protein>
    <recommendedName>
        <fullName>Forkhead box protein C2-A</fullName>
        <shortName>FoxC2-A</shortName>
        <shortName>FoxC2a</shortName>
    </recommendedName>
    <alternativeName>
        <fullName>Fork head domain-related protein 4</fullName>
        <shortName>FD-4</shortName>
        <shortName>xFD-4</shortName>
        <shortName>xFD4 A</shortName>
    </alternativeName>
    <alternativeName>
        <fullName>Forkhead protein 7</fullName>
        <shortName>FKH-7</shortName>
        <shortName>xFKH7</shortName>
    </alternativeName>
</protein>
<gene>
    <name type="primary">foxc2-a</name>
    <name type="synonym">fkh7</name>
</gene>
<name>FXC2A_XENLA</name>
<sequence>MMQARYSVADPNALGVVPYLSEQNYYRAAGTYGSMATPMSVYPTHEQYTQGMGRSYGPYHHHQPTAPKDLVKPPYSYIALITMAIQNAPDKKITLNGIYQFIMDRFPFYRENKQGWQNSIRHNLSLNECFVKVPRDDKKPGKGSYWSLDPDSYNMFENGSFLRRRRRFKRKDVCREKEDRLLKDQGKAQGPISSLELPKHEKKIVIKSESPELPVITKVENLSPDGGSAMQDSPRSVASTPSVSTDNSIPDQHPASNGFSVENIMTLRTSPHGDLSPVPQVPCRTGMVPSLPINYTAQTQSSVYSQACTQSMDTSGSYQCTMRAMSLYAGDRPSHMCAPSSLEEATSEHHNGTSSPLTSMSLGSGQESVLTSSHHQQTATGGQTAAPWYLNPGADIGHLSGHNFGSQQQTFPNVREMFNSHRLGIESSALSEHQVSGNTNCQIPYRSAPSIYRHSSPYAYDCTKY</sequence>
<comment type="function">
    <text evidence="1 6">Transcriptional activator (By similarity). May be involved in the dorso-ventral patterning of the mesoderm (PubMed:11291856).</text>
</comment>
<comment type="subcellular location">
    <subcellularLocation>
        <location evidence="2">Nucleus</location>
    </subcellularLocation>
</comment>
<comment type="tissue specificity">
    <text evidence="5 6 7 8">After the mid-blastula transition, expressed in the dorsolateral mesoderm but not within the dorsal blastopore lip. During gastrulation and neurulation, expressed within the dorsal mesoderm and the lateral border of the neural plate but not within the dorsal midline. In neurula stage embryos, expressed throughout the entire somite-forming mesoderm, at the border between mesoderm and ectoderm but not within the notochord, neuroectoderm or lateral plate mesoderm. From stage 25 to stage 32, expressed in branchial arches, head mesenchyme, neural crest cells, tail tip and in two segmented lines of cells bordering the somites. Tail tip expression persists throughout later development. From stage 32, expressed in the ventral abdominal muscle and around the spinal cord. Only weakly expressed in the pronephric tubules. At hatching, expressed within the heart, foregut, hindbrain and pharyngeal pouches.</text>
</comment>
<comment type="developmental stage">
    <text evidence="5 7 8">Expression begins after the mid-blastula transition (stage 8-8.5) becoming most abundant during gastrulation, then decreasing as development progresses. Expression remains at a very low level during the tailbud and tadpole stages.</text>
</comment>
<comment type="sequence caution" evidence="9">
    <conflict type="frameshift">
        <sequence resource="EMBL-CDS" id="AAI11545"/>
    </conflict>
</comment>
<feature type="chain" id="PRO_0000250438" description="Forkhead box protein C2-A">
    <location>
        <begin position="1"/>
        <end position="465"/>
    </location>
</feature>
<feature type="DNA-binding region" description="Fork-head" evidence="3">
    <location>
        <begin position="72"/>
        <end position="166"/>
    </location>
</feature>
<feature type="region of interest" description="Disordered" evidence="4">
    <location>
        <begin position="174"/>
        <end position="196"/>
    </location>
</feature>
<feature type="region of interest" description="Disordered" evidence="4">
    <location>
        <begin position="219"/>
        <end position="258"/>
    </location>
</feature>
<feature type="region of interest" description="Disordered" evidence="4">
    <location>
        <begin position="339"/>
        <end position="385"/>
    </location>
</feature>
<feature type="compositionally biased region" description="Basic and acidic residues" evidence="4">
    <location>
        <begin position="174"/>
        <end position="186"/>
    </location>
</feature>
<feature type="compositionally biased region" description="Polar residues" evidence="4">
    <location>
        <begin position="230"/>
        <end position="258"/>
    </location>
</feature>
<feature type="compositionally biased region" description="Polar residues" evidence="4">
    <location>
        <begin position="352"/>
        <end position="383"/>
    </location>
</feature>
<feature type="sequence conflict" description="In Ref. 3; no nucleotide entry and 4; no nucleotide entry." evidence="9" ref="3 4">
    <original>A</original>
    <variation>G</variation>
    <location>
        <position position="79"/>
    </location>
</feature>
<reference evidence="9 11" key="1">
    <citation type="journal article" date="2000" name="Dev. Genes Evol.">
        <title>Activin A signaling directly activates Xenopus winged helix factors XFD-4/4', the orthologues to mammalian MFH-1.</title>
        <authorList>
            <person name="Koester M."/>
            <person name="Dillinger K."/>
            <person name="Knoechel W."/>
        </authorList>
    </citation>
    <scope>NUCLEOTIDE SEQUENCE [GENOMIC DNA]</scope>
    <scope>TISSUE SPECIFICITY</scope>
    <scope>DEVELOPMENTAL STAGE</scope>
</reference>
<reference evidence="10" key="2">
    <citation type="submission" date="2005-12" db="EMBL/GenBank/DDBJ databases">
        <authorList>
            <consortium name="NIH - Xenopus Gene Collection (XGC) project"/>
        </authorList>
    </citation>
    <scope>NUCLEOTIDE SEQUENCE [LARGE SCALE MRNA]</scope>
    <source>
        <tissue evidence="10">Neurula</tissue>
    </source>
</reference>
<reference evidence="9" key="3">
    <citation type="journal article" date="1995" name="Roux's Arch. Dev. Biol.">
        <title>Transcription patterns of four different fork head/HNF-3 related genes (XFD-4, 6, 9 and 10) in Xenopus laevis embryos.</title>
        <authorList>
            <person name="Scheucher M."/>
            <person name="Dege P."/>
            <person name="Lef J."/>
            <person name="Hille S."/>
            <person name="Knoechel W."/>
        </authorList>
    </citation>
    <scope>NUCLEOTIDE SEQUENCE [GENOMIC DNA] OF 19-216</scope>
    <scope>TISSUE SPECIFICITY</scope>
    <scope>DEVELOPMENTAL STAGE</scope>
</reference>
<reference evidence="9" key="4">
    <citation type="journal article" date="1992" name="Mech. Dev.">
        <title>Activin A induced expression of a fork head related gene in posterior chordamesoderm (notochord) of Xenopus laevis embryos.</title>
        <authorList>
            <person name="Knoechel S."/>
            <person name="Lef J."/>
            <person name="Clement J.H."/>
            <person name="Klocke B."/>
            <person name="Hille S."/>
            <person name="Koester M."/>
            <person name="Knoechel W."/>
        </authorList>
    </citation>
    <scope>NUCLEOTIDE SEQUENCE [GENOMIC DNA] OF 63-173</scope>
</reference>
<reference evidence="9" key="5">
    <citation type="journal article" date="1994" name="Nucleic Acids Res.">
        <title>Novel HOX, POU and FKH genes expressed during bFGF-induced mesodermal differentiation in Xenopus.</title>
        <authorList>
            <person name="King M.W."/>
            <person name="Moore M.J."/>
        </authorList>
    </citation>
    <scope>IDENTIFICATION</scope>
</reference>
<reference evidence="9" key="6">
    <citation type="journal article" date="1996" name="Int. J. Dev. Biol.">
        <title>A fork head related multigene family is transcribed in Xenopus laevis embryos.</title>
        <authorList>
            <person name="Lef J."/>
            <person name="Dege P."/>
            <person name="Scheucher M."/>
            <person name="Forsbach-Birk V."/>
            <person name="Clement J.H."/>
            <person name="Knoechel W."/>
        </authorList>
    </citation>
    <scope>TISSUE SPECIFICITY</scope>
    <scope>DEVELOPMENTAL STAGE</scope>
</reference>
<reference evidence="9" key="7">
    <citation type="journal article" date="2001" name="Int. J. Dev. Biol.">
        <title>Fox (forkhead) genes are involved in the dorso-ventral patterning of the Xenopus mesoderm.</title>
        <authorList>
            <person name="El-Hodiri H."/>
            <person name="Bhatia-Dey N."/>
            <person name="Kenyon K."/>
            <person name="Ault K."/>
            <person name="Dirksen M.-L."/>
            <person name="Jamrich M."/>
        </authorList>
    </citation>
    <scope>PUTATIVE FUNCTION</scope>
    <scope>TISSUE SPECIFICITY</scope>
</reference>
<reference evidence="9" key="8">
    <citation type="journal article" date="2005" name="Gene">
        <title>Of fox and frogs: fox (fork head/winged helix) transcription factors in Xenopus development.</title>
        <authorList>
            <person name="Pohl B.S."/>
            <person name="Knoechel W."/>
        </authorList>
    </citation>
    <scope>REVIEW</scope>
</reference>
<accession>Q9PVY9</accession>
<accession>Q2T9G0</accession>
<proteinExistence type="evidence at transcript level"/>